<evidence type="ECO:0000255" key="1">
    <source>
        <dbReference type="HAMAP-Rule" id="MF_00555"/>
    </source>
</evidence>
<name>ASNA_CLOTE</name>
<protein>
    <recommendedName>
        <fullName evidence="1">Aspartate--ammonia ligase</fullName>
        <ecNumber evidence="1">6.3.1.1</ecNumber>
    </recommendedName>
    <alternativeName>
        <fullName evidence="1">Asparagine synthetase A</fullName>
    </alternativeName>
</protein>
<comment type="catalytic activity">
    <reaction evidence="1">
        <text>L-aspartate + NH4(+) + ATP = L-asparagine + AMP + diphosphate + H(+)</text>
        <dbReference type="Rhea" id="RHEA:11372"/>
        <dbReference type="ChEBI" id="CHEBI:15378"/>
        <dbReference type="ChEBI" id="CHEBI:28938"/>
        <dbReference type="ChEBI" id="CHEBI:29991"/>
        <dbReference type="ChEBI" id="CHEBI:30616"/>
        <dbReference type="ChEBI" id="CHEBI:33019"/>
        <dbReference type="ChEBI" id="CHEBI:58048"/>
        <dbReference type="ChEBI" id="CHEBI:456215"/>
        <dbReference type="EC" id="6.3.1.1"/>
    </reaction>
</comment>
<comment type="pathway">
    <text evidence="1">Amino-acid biosynthesis; L-asparagine biosynthesis; L-asparagine from L-aspartate (ammonia route): step 1/1.</text>
</comment>
<comment type="subcellular location">
    <subcellularLocation>
        <location evidence="1">Cytoplasm</location>
    </subcellularLocation>
</comment>
<comment type="similarity">
    <text evidence="1">Belongs to the class-II aminoacyl-tRNA synthetase family. AsnA subfamily.</text>
</comment>
<feature type="chain" id="PRO_0000195872" description="Aspartate--ammonia ligase">
    <location>
        <begin position="1"/>
        <end position="341"/>
    </location>
</feature>
<dbReference type="EC" id="6.3.1.1" evidence="1"/>
<dbReference type="EMBL" id="AE015927">
    <property type="protein sequence ID" value="AAO35379.1"/>
    <property type="molecule type" value="Genomic_DNA"/>
</dbReference>
<dbReference type="RefSeq" id="WP_011099045.1">
    <property type="nucleotide sequence ID" value="NC_004557.1"/>
</dbReference>
<dbReference type="SMR" id="Q897F7"/>
<dbReference type="STRING" id="212717.CTC_00781"/>
<dbReference type="GeneID" id="24253458"/>
<dbReference type="KEGG" id="ctc:CTC_00781"/>
<dbReference type="HOGENOM" id="CLU_071543_0_0_9"/>
<dbReference type="OrthoDB" id="9766088at2"/>
<dbReference type="UniPathway" id="UPA00134">
    <property type="reaction ID" value="UER00194"/>
</dbReference>
<dbReference type="Proteomes" id="UP000001412">
    <property type="component" value="Chromosome"/>
</dbReference>
<dbReference type="GO" id="GO:0005829">
    <property type="term" value="C:cytosol"/>
    <property type="evidence" value="ECO:0007669"/>
    <property type="project" value="TreeGrafter"/>
</dbReference>
<dbReference type="GO" id="GO:0004071">
    <property type="term" value="F:aspartate-ammonia ligase activity"/>
    <property type="evidence" value="ECO:0007669"/>
    <property type="project" value="UniProtKB-UniRule"/>
</dbReference>
<dbReference type="GO" id="GO:0005524">
    <property type="term" value="F:ATP binding"/>
    <property type="evidence" value="ECO:0007669"/>
    <property type="project" value="UniProtKB-UniRule"/>
</dbReference>
<dbReference type="GO" id="GO:0140096">
    <property type="term" value="F:catalytic activity, acting on a protein"/>
    <property type="evidence" value="ECO:0007669"/>
    <property type="project" value="UniProtKB-ARBA"/>
</dbReference>
<dbReference type="GO" id="GO:0016740">
    <property type="term" value="F:transferase activity"/>
    <property type="evidence" value="ECO:0007669"/>
    <property type="project" value="UniProtKB-ARBA"/>
</dbReference>
<dbReference type="GO" id="GO:0070981">
    <property type="term" value="P:L-asparagine biosynthetic process"/>
    <property type="evidence" value="ECO:0007669"/>
    <property type="project" value="UniProtKB-UniRule"/>
</dbReference>
<dbReference type="CDD" id="cd00645">
    <property type="entry name" value="AsnA"/>
    <property type="match status" value="1"/>
</dbReference>
<dbReference type="Gene3D" id="3.30.930.10">
    <property type="entry name" value="Bira Bifunctional Protein, Domain 2"/>
    <property type="match status" value="1"/>
</dbReference>
<dbReference type="HAMAP" id="MF_00555">
    <property type="entry name" value="AsnA"/>
    <property type="match status" value="1"/>
</dbReference>
<dbReference type="InterPro" id="IPR006195">
    <property type="entry name" value="aa-tRNA-synth_II"/>
</dbReference>
<dbReference type="InterPro" id="IPR045864">
    <property type="entry name" value="aa-tRNA-synth_II/BPL/LPL"/>
</dbReference>
<dbReference type="InterPro" id="IPR004618">
    <property type="entry name" value="AsnA"/>
</dbReference>
<dbReference type="NCBIfam" id="TIGR00669">
    <property type="entry name" value="asnA"/>
    <property type="match status" value="1"/>
</dbReference>
<dbReference type="PANTHER" id="PTHR30073">
    <property type="entry name" value="ASPARTATE--AMMONIA LIGASE"/>
    <property type="match status" value="1"/>
</dbReference>
<dbReference type="PANTHER" id="PTHR30073:SF5">
    <property type="entry name" value="ASPARTATE--AMMONIA LIGASE"/>
    <property type="match status" value="1"/>
</dbReference>
<dbReference type="Pfam" id="PF03590">
    <property type="entry name" value="AsnA"/>
    <property type="match status" value="1"/>
</dbReference>
<dbReference type="PIRSF" id="PIRSF001555">
    <property type="entry name" value="Asp_ammon_ligase"/>
    <property type="match status" value="1"/>
</dbReference>
<dbReference type="SUPFAM" id="SSF55681">
    <property type="entry name" value="Class II aaRS and biotin synthetases"/>
    <property type="match status" value="1"/>
</dbReference>
<dbReference type="PROSITE" id="PS50862">
    <property type="entry name" value="AA_TRNA_LIGASE_II"/>
    <property type="match status" value="1"/>
</dbReference>
<reference key="1">
    <citation type="journal article" date="2003" name="Proc. Natl. Acad. Sci. U.S.A.">
        <title>The genome sequence of Clostridium tetani, the causative agent of tetanus disease.</title>
        <authorList>
            <person name="Brueggemann H."/>
            <person name="Baeumer S."/>
            <person name="Fricke W.F."/>
            <person name="Wiezer A."/>
            <person name="Liesegang H."/>
            <person name="Decker I."/>
            <person name="Herzberg C."/>
            <person name="Martinez-Arias R."/>
            <person name="Merkl R."/>
            <person name="Henne A."/>
            <person name="Gottschalk G."/>
        </authorList>
    </citation>
    <scope>NUCLEOTIDE SEQUENCE [LARGE SCALE GENOMIC DNA]</scope>
    <source>
        <strain>Massachusetts / E88</strain>
    </source>
</reference>
<organism>
    <name type="scientific">Clostridium tetani (strain Massachusetts / E88)</name>
    <dbReference type="NCBI Taxonomy" id="212717"/>
    <lineage>
        <taxon>Bacteria</taxon>
        <taxon>Bacillati</taxon>
        <taxon>Bacillota</taxon>
        <taxon>Clostridia</taxon>
        <taxon>Eubacteriales</taxon>
        <taxon>Clostridiaceae</taxon>
        <taxon>Clostridium</taxon>
    </lineage>
</organism>
<sequence length="341" mass="40005">MEIKCSERLIIPKEYKTELDLKETAIAIKEVKDCFERALAKQLNLIRVSAPLFVRCDKGLNDNLNGVERPVKFTVKDDNEAAVEIVHSLAKWKRMALYRYNFNADEGLYTDMNAIRRDEELDNTHSIYVDQWDWERIIKKEDRNEEYLKDIVRKIFKAFKETEEHINKLYPFLGEVLPEEVFFMTTQELEDMFPDLTAKEREDAITKEKKAVFLMKIGKTLESGEKHDGRAPDYDDWELNGDILFWNPVLNKAFELSSMGIRVDEESLLKQLKLANCEERKELQFHKMLLEKKLPYTIGGGIGQSRMCMLFLKKAHIGEVQSSIWPEEMIKFCEEKGMTIL</sequence>
<gene>
    <name evidence="1" type="primary">asnA</name>
    <name type="ordered locus">CTC_00781</name>
</gene>
<accession>Q897F7</accession>
<proteinExistence type="inferred from homology"/>
<keyword id="KW-0028">Amino-acid biosynthesis</keyword>
<keyword id="KW-0061">Asparagine biosynthesis</keyword>
<keyword id="KW-0067">ATP-binding</keyword>
<keyword id="KW-0963">Cytoplasm</keyword>
<keyword id="KW-0436">Ligase</keyword>
<keyword id="KW-0547">Nucleotide-binding</keyword>
<keyword id="KW-1185">Reference proteome</keyword>